<reference key="1">
    <citation type="journal article" date="2006" name="Proc. Natl. Acad. Sci. U.S.A.">
        <title>Burkholderia xenovorans LB400 harbors a multi-replicon, 9.73-Mbp genome shaped for versatility.</title>
        <authorList>
            <person name="Chain P.S.G."/>
            <person name="Denef V.J."/>
            <person name="Konstantinidis K.T."/>
            <person name="Vergez L.M."/>
            <person name="Agullo L."/>
            <person name="Reyes V.L."/>
            <person name="Hauser L."/>
            <person name="Cordova M."/>
            <person name="Gomez L."/>
            <person name="Gonzalez M."/>
            <person name="Land M."/>
            <person name="Lao V."/>
            <person name="Larimer F."/>
            <person name="LiPuma J.J."/>
            <person name="Mahenthiralingam E."/>
            <person name="Malfatti S.A."/>
            <person name="Marx C.J."/>
            <person name="Parnell J.J."/>
            <person name="Ramette A."/>
            <person name="Richardson P."/>
            <person name="Seeger M."/>
            <person name="Smith D."/>
            <person name="Spilker T."/>
            <person name="Sul W.J."/>
            <person name="Tsoi T.V."/>
            <person name="Ulrich L.E."/>
            <person name="Zhulin I.B."/>
            <person name="Tiedje J.M."/>
        </authorList>
    </citation>
    <scope>NUCLEOTIDE SEQUENCE [LARGE SCALE GENOMIC DNA]</scope>
    <source>
        <strain>LB400</strain>
    </source>
</reference>
<organism>
    <name type="scientific">Paraburkholderia xenovorans (strain LB400)</name>
    <dbReference type="NCBI Taxonomy" id="266265"/>
    <lineage>
        <taxon>Bacteria</taxon>
        <taxon>Pseudomonadati</taxon>
        <taxon>Pseudomonadota</taxon>
        <taxon>Betaproteobacteria</taxon>
        <taxon>Burkholderiales</taxon>
        <taxon>Burkholderiaceae</taxon>
        <taxon>Paraburkholderia</taxon>
    </lineage>
</organism>
<protein>
    <recommendedName>
        <fullName evidence="1">Glycerol kinase</fullName>
        <ecNumber evidence="1">2.7.1.30</ecNumber>
    </recommendedName>
    <alternativeName>
        <fullName evidence="1">ATP:glycerol 3-phosphotransferase</fullName>
    </alternativeName>
    <alternativeName>
        <fullName evidence="1">Glycerokinase</fullName>
        <shortName evidence="1">GK</shortName>
    </alternativeName>
</protein>
<dbReference type="EC" id="2.7.1.30" evidence="1"/>
<dbReference type="EMBL" id="CP000270">
    <property type="protein sequence ID" value="ABE32296.1"/>
    <property type="molecule type" value="Genomic_DNA"/>
</dbReference>
<dbReference type="RefSeq" id="WP_011489785.1">
    <property type="nucleotide sequence ID" value="NC_007951.1"/>
</dbReference>
<dbReference type="SMR" id="Q13UE3"/>
<dbReference type="STRING" id="266265.Bxe_A0638"/>
<dbReference type="KEGG" id="bxb:DR64_2806"/>
<dbReference type="KEGG" id="bxe:Bxe_A0638"/>
<dbReference type="PATRIC" id="fig|266265.5.peg.3972"/>
<dbReference type="eggNOG" id="COG0554">
    <property type="taxonomic scope" value="Bacteria"/>
</dbReference>
<dbReference type="OrthoDB" id="9805576at2"/>
<dbReference type="UniPathway" id="UPA00618">
    <property type="reaction ID" value="UER00672"/>
</dbReference>
<dbReference type="Proteomes" id="UP000001817">
    <property type="component" value="Chromosome 1"/>
</dbReference>
<dbReference type="GO" id="GO:0005829">
    <property type="term" value="C:cytosol"/>
    <property type="evidence" value="ECO:0007669"/>
    <property type="project" value="TreeGrafter"/>
</dbReference>
<dbReference type="GO" id="GO:0005524">
    <property type="term" value="F:ATP binding"/>
    <property type="evidence" value="ECO:0007669"/>
    <property type="project" value="UniProtKB-UniRule"/>
</dbReference>
<dbReference type="GO" id="GO:0004370">
    <property type="term" value="F:glycerol kinase activity"/>
    <property type="evidence" value="ECO:0000250"/>
    <property type="project" value="UniProtKB"/>
</dbReference>
<dbReference type="GO" id="GO:0019563">
    <property type="term" value="P:glycerol catabolic process"/>
    <property type="evidence" value="ECO:0007669"/>
    <property type="project" value="UniProtKB-UniRule"/>
</dbReference>
<dbReference type="GO" id="GO:0006071">
    <property type="term" value="P:glycerol metabolic process"/>
    <property type="evidence" value="ECO:0000250"/>
    <property type="project" value="UniProtKB"/>
</dbReference>
<dbReference type="GO" id="GO:0006072">
    <property type="term" value="P:glycerol-3-phosphate metabolic process"/>
    <property type="evidence" value="ECO:0007669"/>
    <property type="project" value="InterPro"/>
</dbReference>
<dbReference type="CDD" id="cd07786">
    <property type="entry name" value="FGGY_EcGK_like"/>
    <property type="match status" value="1"/>
</dbReference>
<dbReference type="FunFam" id="3.30.420.40:FF:000007">
    <property type="entry name" value="Glycerol kinase"/>
    <property type="match status" value="1"/>
</dbReference>
<dbReference type="FunFam" id="3.30.420.40:FF:000008">
    <property type="entry name" value="Glycerol kinase"/>
    <property type="match status" value="1"/>
</dbReference>
<dbReference type="Gene3D" id="3.30.420.40">
    <property type="match status" value="2"/>
</dbReference>
<dbReference type="HAMAP" id="MF_00186">
    <property type="entry name" value="Glycerol_kin"/>
    <property type="match status" value="1"/>
</dbReference>
<dbReference type="InterPro" id="IPR043129">
    <property type="entry name" value="ATPase_NBD"/>
</dbReference>
<dbReference type="InterPro" id="IPR000577">
    <property type="entry name" value="Carb_kinase_FGGY"/>
</dbReference>
<dbReference type="InterPro" id="IPR018483">
    <property type="entry name" value="Carb_kinase_FGGY_CS"/>
</dbReference>
<dbReference type="InterPro" id="IPR018485">
    <property type="entry name" value="FGGY_C"/>
</dbReference>
<dbReference type="InterPro" id="IPR018484">
    <property type="entry name" value="FGGY_N"/>
</dbReference>
<dbReference type="InterPro" id="IPR005999">
    <property type="entry name" value="Glycerol_kin"/>
</dbReference>
<dbReference type="NCBIfam" id="TIGR01311">
    <property type="entry name" value="glycerol_kin"/>
    <property type="match status" value="1"/>
</dbReference>
<dbReference type="NCBIfam" id="NF000756">
    <property type="entry name" value="PRK00047.1"/>
    <property type="match status" value="1"/>
</dbReference>
<dbReference type="PANTHER" id="PTHR10196:SF69">
    <property type="entry name" value="GLYCEROL KINASE"/>
    <property type="match status" value="1"/>
</dbReference>
<dbReference type="PANTHER" id="PTHR10196">
    <property type="entry name" value="SUGAR KINASE"/>
    <property type="match status" value="1"/>
</dbReference>
<dbReference type="Pfam" id="PF02782">
    <property type="entry name" value="FGGY_C"/>
    <property type="match status" value="1"/>
</dbReference>
<dbReference type="Pfam" id="PF00370">
    <property type="entry name" value="FGGY_N"/>
    <property type="match status" value="1"/>
</dbReference>
<dbReference type="PIRSF" id="PIRSF000538">
    <property type="entry name" value="GlpK"/>
    <property type="match status" value="1"/>
</dbReference>
<dbReference type="SUPFAM" id="SSF53067">
    <property type="entry name" value="Actin-like ATPase domain"/>
    <property type="match status" value="2"/>
</dbReference>
<dbReference type="PROSITE" id="PS00933">
    <property type="entry name" value="FGGY_KINASES_1"/>
    <property type="match status" value="1"/>
</dbReference>
<dbReference type="PROSITE" id="PS00445">
    <property type="entry name" value="FGGY_KINASES_2"/>
    <property type="match status" value="1"/>
</dbReference>
<feature type="chain" id="PRO_1000020715" description="Glycerol kinase">
    <location>
        <begin position="1"/>
        <end position="499"/>
    </location>
</feature>
<feature type="binding site" evidence="1">
    <location>
        <position position="13"/>
    </location>
    <ligand>
        <name>ADP</name>
        <dbReference type="ChEBI" id="CHEBI:456216"/>
    </ligand>
</feature>
<feature type="binding site" evidence="1">
    <location>
        <position position="13"/>
    </location>
    <ligand>
        <name>ATP</name>
        <dbReference type="ChEBI" id="CHEBI:30616"/>
    </ligand>
</feature>
<feature type="binding site" evidence="1">
    <location>
        <position position="13"/>
    </location>
    <ligand>
        <name>sn-glycerol 3-phosphate</name>
        <dbReference type="ChEBI" id="CHEBI:57597"/>
    </ligand>
</feature>
<feature type="binding site" evidence="1">
    <location>
        <position position="14"/>
    </location>
    <ligand>
        <name>ATP</name>
        <dbReference type="ChEBI" id="CHEBI:30616"/>
    </ligand>
</feature>
<feature type="binding site" evidence="1">
    <location>
        <position position="15"/>
    </location>
    <ligand>
        <name>ATP</name>
        <dbReference type="ChEBI" id="CHEBI:30616"/>
    </ligand>
</feature>
<feature type="binding site" evidence="1">
    <location>
        <position position="17"/>
    </location>
    <ligand>
        <name>ADP</name>
        <dbReference type="ChEBI" id="CHEBI:456216"/>
    </ligand>
</feature>
<feature type="binding site" evidence="1">
    <location>
        <position position="83"/>
    </location>
    <ligand>
        <name>glycerol</name>
        <dbReference type="ChEBI" id="CHEBI:17754"/>
    </ligand>
</feature>
<feature type="binding site" evidence="1">
    <location>
        <position position="83"/>
    </location>
    <ligand>
        <name>sn-glycerol 3-phosphate</name>
        <dbReference type="ChEBI" id="CHEBI:57597"/>
    </ligand>
</feature>
<feature type="binding site" evidence="1">
    <location>
        <position position="84"/>
    </location>
    <ligand>
        <name>glycerol</name>
        <dbReference type="ChEBI" id="CHEBI:17754"/>
    </ligand>
</feature>
<feature type="binding site" evidence="1">
    <location>
        <position position="84"/>
    </location>
    <ligand>
        <name>sn-glycerol 3-phosphate</name>
        <dbReference type="ChEBI" id="CHEBI:57597"/>
    </ligand>
</feature>
<feature type="binding site" evidence="1">
    <location>
        <position position="135"/>
    </location>
    <ligand>
        <name>glycerol</name>
        <dbReference type="ChEBI" id="CHEBI:17754"/>
    </ligand>
</feature>
<feature type="binding site" evidence="1">
    <location>
        <position position="135"/>
    </location>
    <ligand>
        <name>sn-glycerol 3-phosphate</name>
        <dbReference type="ChEBI" id="CHEBI:57597"/>
    </ligand>
</feature>
<feature type="binding site" evidence="1">
    <location>
        <position position="244"/>
    </location>
    <ligand>
        <name>glycerol</name>
        <dbReference type="ChEBI" id="CHEBI:17754"/>
    </ligand>
</feature>
<feature type="binding site" evidence="1">
    <location>
        <position position="244"/>
    </location>
    <ligand>
        <name>sn-glycerol 3-phosphate</name>
        <dbReference type="ChEBI" id="CHEBI:57597"/>
    </ligand>
</feature>
<feature type="binding site" evidence="1">
    <location>
        <position position="245"/>
    </location>
    <ligand>
        <name>glycerol</name>
        <dbReference type="ChEBI" id="CHEBI:17754"/>
    </ligand>
</feature>
<feature type="binding site" evidence="1">
    <location>
        <position position="266"/>
    </location>
    <ligand>
        <name>ADP</name>
        <dbReference type="ChEBI" id="CHEBI:456216"/>
    </ligand>
</feature>
<feature type="binding site" evidence="1">
    <location>
        <position position="266"/>
    </location>
    <ligand>
        <name>ATP</name>
        <dbReference type="ChEBI" id="CHEBI:30616"/>
    </ligand>
</feature>
<feature type="binding site" evidence="1">
    <location>
        <position position="309"/>
    </location>
    <ligand>
        <name>ADP</name>
        <dbReference type="ChEBI" id="CHEBI:456216"/>
    </ligand>
</feature>
<feature type="binding site" evidence="1">
    <location>
        <position position="309"/>
    </location>
    <ligand>
        <name>ATP</name>
        <dbReference type="ChEBI" id="CHEBI:30616"/>
    </ligand>
</feature>
<feature type="binding site" evidence="1">
    <location>
        <position position="313"/>
    </location>
    <ligand>
        <name>ATP</name>
        <dbReference type="ChEBI" id="CHEBI:30616"/>
    </ligand>
</feature>
<feature type="binding site" evidence="1">
    <location>
        <position position="410"/>
    </location>
    <ligand>
        <name>ADP</name>
        <dbReference type="ChEBI" id="CHEBI:456216"/>
    </ligand>
</feature>
<feature type="binding site" evidence="1">
    <location>
        <position position="410"/>
    </location>
    <ligand>
        <name>ATP</name>
        <dbReference type="ChEBI" id="CHEBI:30616"/>
    </ligand>
</feature>
<feature type="binding site" evidence="1">
    <location>
        <position position="414"/>
    </location>
    <ligand>
        <name>ADP</name>
        <dbReference type="ChEBI" id="CHEBI:456216"/>
    </ligand>
</feature>
<proteinExistence type="inferred from homology"/>
<gene>
    <name evidence="1" type="primary">glpK</name>
    <name type="ordered locus">Bxeno_A3758</name>
    <name type="ORF">Bxe_A0638</name>
</gene>
<name>GLPK_PARXL</name>
<keyword id="KW-0067">ATP-binding</keyword>
<keyword id="KW-0319">Glycerol metabolism</keyword>
<keyword id="KW-0418">Kinase</keyword>
<keyword id="KW-0547">Nucleotide-binding</keyword>
<keyword id="KW-1185">Reference proteome</keyword>
<keyword id="KW-0808">Transferase</keyword>
<evidence type="ECO:0000255" key="1">
    <source>
        <dbReference type="HAMAP-Rule" id="MF_00186"/>
    </source>
</evidence>
<sequence>MQDQYILALDQGTTSSRAMLFDRLGNIVSTAQKEFQQIYPRPGWVEHDPQEIWSTQAGVAAEAVTRAGMNGTSIAAIGITNQRETTIVWDRETGHPIYNAIVWQDRRTADFCDQLKEQGLEEKVRAKTGLPIDSYFSATKIRWILDNVEGAREKAKQGRLAFGTVDSWLVWNFTKGGLHITDVTNASRTMLFNIHSLKWDDELLEALDIPRSMLPEVRASSETYGPTKTTVFASKIPLAGIAGDQHAALFGQMCTESGMVKNTYGTGCFLVMNTGDKPIESKNNLVTTIAWQIGDQINYALEGSIFIGGAVVQWLRDGLGIIRNAAEIETLARSVPHCDGVYLVPAFAGLGAPHWNARARGTLFGVTRGTSSAHIARAALDSIAYQSVDVLKAMEADSGIRIGELRVDGGACANNLLMQFQADILGVDAVRPKVSETTALGAAYLAGLAVGYWKDVDELQSQWKLDRRFTPALPHAEVKACLDGWKRAIRAAKAWADTP</sequence>
<accession>Q13UE3</accession>
<comment type="function">
    <text evidence="1">Key enzyme in the regulation of glycerol uptake and metabolism. Catalyzes the phosphorylation of glycerol to yield sn-glycerol 3-phosphate.</text>
</comment>
<comment type="catalytic activity">
    <reaction evidence="1">
        <text>glycerol + ATP = sn-glycerol 3-phosphate + ADP + H(+)</text>
        <dbReference type="Rhea" id="RHEA:21644"/>
        <dbReference type="ChEBI" id="CHEBI:15378"/>
        <dbReference type="ChEBI" id="CHEBI:17754"/>
        <dbReference type="ChEBI" id="CHEBI:30616"/>
        <dbReference type="ChEBI" id="CHEBI:57597"/>
        <dbReference type="ChEBI" id="CHEBI:456216"/>
        <dbReference type="EC" id="2.7.1.30"/>
    </reaction>
</comment>
<comment type="activity regulation">
    <text evidence="1">Inhibited by fructose 1,6-bisphosphate (FBP).</text>
</comment>
<comment type="pathway">
    <text evidence="1">Polyol metabolism; glycerol degradation via glycerol kinase pathway; sn-glycerol 3-phosphate from glycerol: step 1/1.</text>
</comment>
<comment type="similarity">
    <text evidence="1">Belongs to the FGGY kinase family.</text>
</comment>